<dbReference type="EC" id="5.1.1.7" evidence="1"/>
<dbReference type="EMBL" id="CP000051">
    <property type="protein sequence ID" value="AAX50702.1"/>
    <property type="molecule type" value="Genomic_DNA"/>
</dbReference>
<dbReference type="RefSeq" id="WP_011324734.1">
    <property type="nucleotide sequence ID" value="NC_007429.1"/>
</dbReference>
<dbReference type="SMR" id="Q3KLS0"/>
<dbReference type="KEGG" id="cta:CTA_0470"/>
<dbReference type="HOGENOM" id="CLU_053306_3_2_0"/>
<dbReference type="UniPathway" id="UPA00034">
    <property type="reaction ID" value="UER00025"/>
</dbReference>
<dbReference type="Proteomes" id="UP000002532">
    <property type="component" value="Chromosome"/>
</dbReference>
<dbReference type="GO" id="GO:0005829">
    <property type="term" value="C:cytosol"/>
    <property type="evidence" value="ECO:0007669"/>
    <property type="project" value="TreeGrafter"/>
</dbReference>
<dbReference type="GO" id="GO:0008837">
    <property type="term" value="F:diaminopimelate epimerase activity"/>
    <property type="evidence" value="ECO:0007669"/>
    <property type="project" value="UniProtKB-UniRule"/>
</dbReference>
<dbReference type="GO" id="GO:0009089">
    <property type="term" value="P:lysine biosynthetic process via diaminopimelate"/>
    <property type="evidence" value="ECO:0007669"/>
    <property type="project" value="UniProtKB-UniRule"/>
</dbReference>
<dbReference type="FunFam" id="3.10.310.10:FF:000030">
    <property type="entry name" value="Diaminopimelate epimerase"/>
    <property type="match status" value="1"/>
</dbReference>
<dbReference type="Gene3D" id="3.10.310.10">
    <property type="entry name" value="Diaminopimelate Epimerase, Chain A, domain 1"/>
    <property type="match status" value="2"/>
</dbReference>
<dbReference type="HAMAP" id="MF_00197">
    <property type="entry name" value="DAP_epimerase"/>
    <property type="match status" value="1"/>
</dbReference>
<dbReference type="InterPro" id="IPR053407">
    <property type="entry name" value="DAP_Epimerase"/>
</dbReference>
<dbReference type="InterPro" id="IPR018510">
    <property type="entry name" value="DAP_epimerase_AS"/>
</dbReference>
<dbReference type="InterPro" id="IPR001653">
    <property type="entry name" value="DAP_epimerase_DapF"/>
</dbReference>
<dbReference type="NCBIfam" id="NF038284">
    <property type="entry name" value="bifunc_DapF"/>
    <property type="match status" value="1"/>
</dbReference>
<dbReference type="NCBIfam" id="TIGR00652">
    <property type="entry name" value="DapF"/>
    <property type="match status" value="1"/>
</dbReference>
<dbReference type="PANTHER" id="PTHR31689:SF0">
    <property type="entry name" value="DIAMINOPIMELATE EPIMERASE"/>
    <property type="match status" value="1"/>
</dbReference>
<dbReference type="PANTHER" id="PTHR31689">
    <property type="entry name" value="DIAMINOPIMELATE EPIMERASE, CHLOROPLASTIC"/>
    <property type="match status" value="1"/>
</dbReference>
<dbReference type="Pfam" id="PF01678">
    <property type="entry name" value="DAP_epimerase"/>
    <property type="match status" value="2"/>
</dbReference>
<dbReference type="SUPFAM" id="SSF54506">
    <property type="entry name" value="Diaminopimelate epimerase-like"/>
    <property type="match status" value="2"/>
</dbReference>
<dbReference type="PROSITE" id="PS01326">
    <property type="entry name" value="DAP_EPIMERASE"/>
    <property type="match status" value="1"/>
</dbReference>
<organism>
    <name type="scientific">Chlamydia trachomatis serovar A (strain ATCC VR-571B / DSM 19440 / HAR-13)</name>
    <dbReference type="NCBI Taxonomy" id="315277"/>
    <lineage>
        <taxon>Bacteria</taxon>
        <taxon>Pseudomonadati</taxon>
        <taxon>Chlamydiota</taxon>
        <taxon>Chlamydiia</taxon>
        <taxon>Chlamydiales</taxon>
        <taxon>Chlamydiaceae</taxon>
        <taxon>Chlamydia/Chlamydophila group</taxon>
        <taxon>Chlamydia</taxon>
    </lineage>
</organism>
<keyword id="KW-0028">Amino-acid biosynthesis</keyword>
<keyword id="KW-0963">Cytoplasm</keyword>
<keyword id="KW-0413">Isomerase</keyword>
<keyword id="KW-0457">Lysine biosynthesis</keyword>
<accession>Q3KLS0</accession>
<gene>
    <name evidence="1" type="primary">dapF</name>
    <name type="ordered locus">CTA_0470</name>
</gene>
<feature type="chain" id="PRO_1000011867" description="Diaminopimelate epimerase">
    <location>
        <begin position="1"/>
        <end position="275"/>
    </location>
</feature>
<feature type="active site" description="Proton donor" evidence="1">
    <location>
        <position position="72"/>
    </location>
</feature>
<feature type="active site" description="Proton acceptor" evidence="1">
    <location>
        <position position="207"/>
    </location>
</feature>
<feature type="binding site" evidence="1">
    <location>
        <position position="20"/>
    </location>
    <ligand>
        <name>substrate</name>
    </ligand>
</feature>
<feature type="binding site" evidence="1">
    <location>
        <position position="63"/>
    </location>
    <ligand>
        <name>substrate</name>
    </ligand>
</feature>
<feature type="binding site" evidence="1">
    <location>
        <begin position="73"/>
        <end position="74"/>
    </location>
    <ligand>
        <name>substrate</name>
    </ligand>
</feature>
<feature type="binding site" evidence="1">
    <location>
        <position position="179"/>
    </location>
    <ligand>
        <name>substrate</name>
    </ligand>
</feature>
<feature type="binding site" evidence="1">
    <location>
        <begin position="197"/>
        <end position="198"/>
    </location>
    <ligand>
        <name>substrate</name>
    </ligand>
</feature>
<feature type="binding site" evidence="1">
    <location>
        <begin position="208"/>
        <end position="209"/>
    </location>
    <ligand>
        <name>substrate</name>
    </ligand>
</feature>
<feature type="site" description="Could be important to modulate the pK values of the two catalytic cysteine residues" evidence="1">
    <location>
        <position position="147"/>
    </location>
</feature>
<feature type="site" description="Could be important to modulate the pK values of the two catalytic cysteine residues" evidence="1">
    <location>
        <position position="197"/>
    </location>
</feature>
<comment type="function">
    <text evidence="1">Catalyzes the stereoinversion of LL-2,6-diaminopimelate (L,L-DAP) to meso-diaminopimelate (meso-DAP), a precursor of L-lysine and an essential component of the bacterial peptidoglycan.</text>
</comment>
<comment type="catalytic activity">
    <reaction evidence="1">
        <text>(2S,6S)-2,6-diaminopimelate = meso-2,6-diaminopimelate</text>
        <dbReference type="Rhea" id="RHEA:15393"/>
        <dbReference type="ChEBI" id="CHEBI:57609"/>
        <dbReference type="ChEBI" id="CHEBI:57791"/>
        <dbReference type="EC" id="5.1.1.7"/>
    </reaction>
</comment>
<comment type="pathway">
    <text evidence="1">Amino-acid biosynthesis; L-lysine biosynthesis via DAP pathway; DL-2,6-diaminopimelate from LL-2,6-diaminopimelate: step 1/1.</text>
</comment>
<comment type="subunit">
    <text evidence="1">Homodimer.</text>
</comment>
<comment type="subcellular location">
    <subcellularLocation>
        <location evidence="1">Cytoplasm</location>
    </subcellularLocation>
</comment>
<comment type="similarity">
    <text evidence="1">Belongs to the diaminopimelate epimerase family.</text>
</comment>
<reference key="1">
    <citation type="journal article" date="2005" name="Infect. Immun.">
        <title>Comparative genomic analysis of Chlamydia trachomatis oculotropic and genitotropic strains.</title>
        <authorList>
            <person name="Carlson J.H."/>
            <person name="Porcella S.F."/>
            <person name="McClarty G."/>
            <person name="Caldwell H.D."/>
        </authorList>
    </citation>
    <scope>NUCLEOTIDE SEQUENCE [LARGE SCALE GENOMIC DNA]</scope>
    <source>
        <strain>ATCC VR-571B / DSM 19440 / HAR-13</strain>
    </source>
</reference>
<proteinExistence type="inferred from homology"/>
<sequence>MGFSSLLTTCRYLLYSGAGNSFILGESMPSLEDVLFLCQEEMVDGFLCVESSEIADAKLTVFNSDGSIASMCGNGLRCAMAHVAQCFGLEDVSIETERGVYQGKFFSMNRVLVDMTLPDWKKAERKLTHVLPGMPEQVFFIDAGVPHVVVFVSDLSKVPVQEWGSFLRYHEDFAPEGVNVDFVQRKKDDLLLVYTYERGCERETLSCGTGMLASALVAADIFSLGQDFSIAVCSRSRNLIKIFSEKGKVFLEGPVSLLNRSENFGWLEPKSRRFG</sequence>
<protein>
    <recommendedName>
        <fullName evidence="1">Diaminopimelate epimerase</fullName>
        <shortName evidence="1">DAP epimerase</shortName>
        <ecNumber evidence="1">5.1.1.7</ecNumber>
    </recommendedName>
    <alternativeName>
        <fullName evidence="1">PLP-independent amino acid racemase</fullName>
    </alternativeName>
</protein>
<name>DAPF_CHLTA</name>
<evidence type="ECO:0000255" key="1">
    <source>
        <dbReference type="HAMAP-Rule" id="MF_00197"/>
    </source>
</evidence>